<name>IF2_BRUME</name>
<protein>
    <recommendedName>
        <fullName evidence="2">Translation initiation factor IF-2</fullName>
    </recommendedName>
</protein>
<sequence>MSDKTNDDKTLSVNPKKTLTLKRPGVEQSTVRQNFSHGRTKAVVVETKKRKFSRPDEKPEVEAAAAPKPAAPAAAPQQAPASAPVSASAAQASAPQPAPVKAPATKAPAAPSAPVTKPHVAQQRPVHQRPGGQQAQRPRPADRSGMVLNTLSRSEMDARRRALEEAQIREVEERARAVEEAKRRAEEDARRAKEHEESARRQAEEEARLKAEAEARRKAEEEAAKRMPQPEARSERRDDARPAPYGARPQQAGRPQGGRPQPAGRPQQGSPRPAPIIADAAPIAGKPLPQSQLRKPGQSDDDDDRRSGAARRGVAAKPEVRAPKVVKGEDDRRRGKLTLTSNLEEEGRSRSLSAMRRRQEKFKRSQMQETREKISREVTIPETITLQELAQRMAERSVDIIKYLMKQGQMMKPGDVIDADTAQLIAEEFGHTVKRVAESDVEEGIFDVADNESAMVSRPPVVTIMGHVDHGKTSLLDAIRHANVVSGEAGGITQHIGAYQVVQNGQKITFIDTPGHAAFTAMRARGAQATDIAILVVAADDSVMPQTIESINHAKAAGVPIIVAINKIDKPAADPQKVRTALLQHEVFVESMGGEVLDVEVSAKNKINLDKLLDAVLLQAEMLDLKADPDRTAEGVVIEAQLDRGRGSVATVLIQKGTLHPGDILVAGSEWGRVRALVNDRGEHVKEAGPAMPVEILGLQGTPQAGDRFAVVANEAKAREIAEYRQRLARDKAVARQSGARGSLEQMMNQLQVSGTKEFPLVIKGDVQGSIEAITNALDKLGTDEVRARIVHSGAGGITESDVSLAEASNAAIIGFNVRANKQARDSAEQQGIEIRYYNIIYDLIDDVKAAMSGLLSPERRETFLGNAEILEVFNITKVGKVAGCRVTEGKVERGAGVRLIRDNVVIHEGKLKTLKRFKDEVAEVPSGQECGMAFENYDDIRAGDVIEAFRVEHVSRTL</sequence>
<feature type="chain" id="PRO_0000137178" description="Translation initiation factor IF-2">
    <location>
        <begin position="1"/>
        <end position="959"/>
    </location>
</feature>
<feature type="domain" description="tr-type G">
    <location>
        <begin position="457"/>
        <end position="626"/>
    </location>
</feature>
<feature type="region of interest" description="Disordered" evidence="3">
    <location>
        <begin position="1"/>
        <end position="374"/>
    </location>
</feature>
<feature type="region of interest" description="G1" evidence="1">
    <location>
        <begin position="466"/>
        <end position="473"/>
    </location>
</feature>
<feature type="region of interest" description="G2" evidence="1">
    <location>
        <begin position="491"/>
        <end position="495"/>
    </location>
</feature>
<feature type="region of interest" description="G3" evidence="1">
    <location>
        <begin position="512"/>
        <end position="515"/>
    </location>
</feature>
<feature type="region of interest" description="G4" evidence="1">
    <location>
        <begin position="566"/>
        <end position="569"/>
    </location>
</feature>
<feature type="region of interest" description="G5" evidence="1">
    <location>
        <begin position="602"/>
        <end position="604"/>
    </location>
</feature>
<feature type="compositionally biased region" description="Basic and acidic residues" evidence="3">
    <location>
        <begin position="1"/>
        <end position="10"/>
    </location>
</feature>
<feature type="compositionally biased region" description="Polar residues" evidence="3">
    <location>
        <begin position="27"/>
        <end position="37"/>
    </location>
</feature>
<feature type="compositionally biased region" description="Low complexity" evidence="3">
    <location>
        <begin position="63"/>
        <end position="118"/>
    </location>
</feature>
<feature type="compositionally biased region" description="Low complexity" evidence="3">
    <location>
        <begin position="128"/>
        <end position="138"/>
    </location>
</feature>
<feature type="compositionally biased region" description="Basic and acidic residues" evidence="3">
    <location>
        <begin position="154"/>
        <end position="225"/>
    </location>
</feature>
<feature type="compositionally biased region" description="Basic and acidic residues" evidence="3">
    <location>
        <begin position="232"/>
        <end position="241"/>
    </location>
</feature>
<feature type="compositionally biased region" description="Low complexity" evidence="3">
    <location>
        <begin position="246"/>
        <end position="284"/>
    </location>
</feature>
<feature type="compositionally biased region" description="Basic and acidic residues" evidence="3">
    <location>
        <begin position="318"/>
        <end position="333"/>
    </location>
</feature>
<feature type="binding site" evidence="2">
    <location>
        <begin position="466"/>
        <end position="473"/>
    </location>
    <ligand>
        <name>GTP</name>
        <dbReference type="ChEBI" id="CHEBI:37565"/>
    </ligand>
</feature>
<feature type="binding site" evidence="2">
    <location>
        <begin position="512"/>
        <end position="516"/>
    </location>
    <ligand>
        <name>GTP</name>
        <dbReference type="ChEBI" id="CHEBI:37565"/>
    </ligand>
</feature>
<feature type="binding site" evidence="2">
    <location>
        <begin position="566"/>
        <end position="569"/>
    </location>
    <ligand>
        <name>GTP</name>
        <dbReference type="ChEBI" id="CHEBI:37565"/>
    </ligand>
</feature>
<gene>
    <name evidence="2" type="primary">infB</name>
    <name type="ordered locus">BMEI1965</name>
</gene>
<reference key="1">
    <citation type="journal article" date="2002" name="Proc. Natl. Acad. Sci. U.S.A.">
        <title>The genome sequence of the facultative intracellular pathogen Brucella melitensis.</title>
        <authorList>
            <person name="DelVecchio V.G."/>
            <person name="Kapatral V."/>
            <person name="Redkar R.J."/>
            <person name="Patra G."/>
            <person name="Mujer C."/>
            <person name="Los T."/>
            <person name="Ivanova N."/>
            <person name="Anderson I."/>
            <person name="Bhattacharyya A."/>
            <person name="Lykidis A."/>
            <person name="Reznik G."/>
            <person name="Jablonski L."/>
            <person name="Larsen N."/>
            <person name="D'Souza M."/>
            <person name="Bernal A."/>
            <person name="Mazur M."/>
            <person name="Goltsman E."/>
            <person name="Selkov E."/>
            <person name="Elzer P.H."/>
            <person name="Hagius S."/>
            <person name="O'Callaghan D."/>
            <person name="Letesson J.-J."/>
            <person name="Haselkorn R."/>
            <person name="Kyrpides N.C."/>
            <person name="Overbeek R."/>
        </authorList>
    </citation>
    <scope>NUCLEOTIDE SEQUENCE [LARGE SCALE GENOMIC DNA]</scope>
    <source>
        <strain>ATCC 23456 / CCUG 17765 / NCTC 10094 / 16M</strain>
    </source>
</reference>
<organism>
    <name type="scientific">Brucella melitensis biotype 1 (strain ATCC 23456 / CCUG 17765 / NCTC 10094 / 16M)</name>
    <dbReference type="NCBI Taxonomy" id="224914"/>
    <lineage>
        <taxon>Bacteria</taxon>
        <taxon>Pseudomonadati</taxon>
        <taxon>Pseudomonadota</taxon>
        <taxon>Alphaproteobacteria</taxon>
        <taxon>Hyphomicrobiales</taxon>
        <taxon>Brucellaceae</taxon>
        <taxon>Brucella/Ochrobactrum group</taxon>
        <taxon>Brucella</taxon>
    </lineage>
</organism>
<dbReference type="EMBL" id="AE008917">
    <property type="protein sequence ID" value="AAL53146.1"/>
    <property type="status" value="ALT_INIT"/>
    <property type="molecule type" value="Genomic_DNA"/>
</dbReference>
<dbReference type="PIR" id="AG3497">
    <property type="entry name" value="AG3497"/>
</dbReference>
<dbReference type="RefSeq" id="WP_004684582.1">
    <property type="nucleotide sequence ID" value="NZ_GG703778.1"/>
</dbReference>
<dbReference type="SMR" id="Q8YEB3"/>
<dbReference type="GeneID" id="29594849"/>
<dbReference type="KEGG" id="bme:BMEI1965"/>
<dbReference type="KEGG" id="bmel:DK63_1525"/>
<dbReference type="PATRIC" id="fig|224914.52.peg.1610"/>
<dbReference type="eggNOG" id="COG0532">
    <property type="taxonomic scope" value="Bacteria"/>
</dbReference>
<dbReference type="PhylomeDB" id="Q8YEB3"/>
<dbReference type="Proteomes" id="UP000000419">
    <property type="component" value="Chromosome I"/>
</dbReference>
<dbReference type="GO" id="GO:0005829">
    <property type="term" value="C:cytosol"/>
    <property type="evidence" value="ECO:0007669"/>
    <property type="project" value="TreeGrafter"/>
</dbReference>
<dbReference type="GO" id="GO:0005525">
    <property type="term" value="F:GTP binding"/>
    <property type="evidence" value="ECO:0007669"/>
    <property type="project" value="UniProtKB-KW"/>
</dbReference>
<dbReference type="GO" id="GO:0003924">
    <property type="term" value="F:GTPase activity"/>
    <property type="evidence" value="ECO:0007669"/>
    <property type="project" value="UniProtKB-UniRule"/>
</dbReference>
<dbReference type="GO" id="GO:0097216">
    <property type="term" value="F:guanosine tetraphosphate binding"/>
    <property type="evidence" value="ECO:0007669"/>
    <property type="project" value="UniProtKB-ARBA"/>
</dbReference>
<dbReference type="GO" id="GO:0003743">
    <property type="term" value="F:translation initiation factor activity"/>
    <property type="evidence" value="ECO:0007669"/>
    <property type="project" value="UniProtKB-UniRule"/>
</dbReference>
<dbReference type="CDD" id="cd01887">
    <property type="entry name" value="IF2_eIF5B"/>
    <property type="match status" value="1"/>
</dbReference>
<dbReference type="CDD" id="cd03702">
    <property type="entry name" value="IF2_mtIF2_II"/>
    <property type="match status" value="1"/>
</dbReference>
<dbReference type="CDD" id="cd03692">
    <property type="entry name" value="mtIF2_IVc"/>
    <property type="match status" value="1"/>
</dbReference>
<dbReference type="FunFam" id="2.40.30.10:FF:000007">
    <property type="entry name" value="Translation initiation factor IF-2"/>
    <property type="match status" value="1"/>
</dbReference>
<dbReference type="FunFam" id="2.40.30.10:FF:000008">
    <property type="entry name" value="Translation initiation factor IF-2"/>
    <property type="match status" value="1"/>
</dbReference>
<dbReference type="FunFam" id="3.40.50.10050:FF:000001">
    <property type="entry name" value="Translation initiation factor IF-2"/>
    <property type="match status" value="1"/>
</dbReference>
<dbReference type="FunFam" id="3.40.50.300:FF:000019">
    <property type="entry name" value="Translation initiation factor IF-2"/>
    <property type="match status" value="1"/>
</dbReference>
<dbReference type="Gene3D" id="3.40.50.300">
    <property type="entry name" value="P-loop containing nucleotide triphosphate hydrolases"/>
    <property type="match status" value="1"/>
</dbReference>
<dbReference type="Gene3D" id="2.40.30.10">
    <property type="entry name" value="Translation factors"/>
    <property type="match status" value="2"/>
</dbReference>
<dbReference type="Gene3D" id="3.40.50.10050">
    <property type="entry name" value="Translation initiation factor IF- 2, domain 3"/>
    <property type="match status" value="1"/>
</dbReference>
<dbReference type="HAMAP" id="MF_00100_B">
    <property type="entry name" value="IF_2_B"/>
    <property type="match status" value="1"/>
</dbReference>
<dbReference type="InterPro" id="IPR053905">
    <property type="entry name" value="EF-G-like_DII"/>
</dbReference>
<dbReference type="InterPro" id="IPR004161">
    <property type="entry name" value="EFTu-like_2"/>
</dbReference>
<dbReference type="InterPro" id="IPR013575">
    <property type="entry name" value="IF2_assoc_dom_bac"/>
</dbReference>
<dbReference type="InterPro" id="IPR044145">
    <property type="entry name" value="IF2_II"/>
</dbReference>
<dbReference type="InterPro" id="IPR006847">
    <property type="entry name" value="IF2_N"/>
</dbReference>
<dbReference type="InterPro" id="IPR027417">
    <property type="entry name" value="P-loop_NTPase"/>
</dbReference>
<dbReference type="InterPro" id="IPR005225">
    <property type="entry name" value="Small_GTP-bd"/>
</dbReference>
<dbReference type="InterPro" id="IPR000795">
    <property type="entry name" value="T_Tr_GTP-bd_dom"/>
</dbReference>
<dbReference type="InterPro" id="IPR000178">
    <property type="entry name" value="TF_IF2_bacterial-like"/>
</dbReference>
<dbReference type="InterPro" id="IPR015760">
    <property type="entry name" value="TIF_IF2"/>
</dbReference>
<dbReference type="InterPro" id="IPR023115">
    <property type="entry name" value="TIF_IF2_dom3"/>
</dbReference>
<dbReference type="InterPro" id="IPR036925">
    <property type="entry name" value="TIF_IF2_dom3_sf"/>
</dbReference>
<dbReference type="InterPro" id="IPR009000">
    <property type="entry name" value="Transl_B-barrel_sf"/>
</dbReference>
<dbReference type="NCBIfam" id="TIGR00487">
    <property type="entry name" value="IF-2"/>
    <property type="match status" value="1"/>
</dbReference>
<dbReference type="NCBIfam" id="TIGR00231">
    <property type="entry name" value="small_GTP"/>
    <property type="match status" value="1"/>
</dbReference>
<dbReference type="PANTHER" id="PTHR43381:SF5">
    <property type="entry name" value="TR-TYPE G DOMAIN-CONTAINING PROTEIN"/>
    <property type="match status" value="1"/>
</dbReference>
<dbReference type="PANTHER" id="PTHR43381">
    <property type="entry name" value="TRANSLATION INITIATION FACTOR IF-2-RELATED"/>
    <property type="match status" value="1"/>
</dbReference>
<dbReference type="Pfam" id="PF22042">
    <property type="entry name" value="EF-G_D2"/>
    <property type="match status" value="1"/>
</dbReference>
<dbReference type="Pfam" id="PF00009">
    <property type="entry name" value="GTP_EFTU"/>
    <property type="match status" value="1"/>
</dbReference>
<dbReference type="Pfam" id="PF03144">
    <property type="entry name" value="GTP_EFTU_D2"/>
    <property type="match status" value="1"/>
</dbReference>
<dbReference type="Pfam" id="PF11987">
    <property type="entry name" value="IF-2"/>
    <property type="match status" value="1"/>
</dbReference>
<dbReference type="Pfam" id="PF08364">
    <property type="entry name" value="IF2_assoc"/>
    <property type="match status" value="1"/>
</dbReference>
<dbReference type="Pfam" id="PF04760">
    <property type="entry name" value="IF2_N"/>
    <property type="match status" value="1"/>
</dbReference>
<dbReference type="SUPFAM" id="SSF52156">
    <property type="entry name" value="Initiation factor IF2/eIF5b, domain 3"/>
    <property type="match status" value="1"/>
</dbReference>
<dbReference type="SUPFAM" id="SSF52540">
    <property type="entry name" value="P-loop containing nucleoside triphosphate hydrolases"/>
    <property type="match status" value="1"/>
</dbReference>
<dbReference type="SUPFAM" id="SSF50447">
    <property type="entry name" value="Translation proteins"/>
    <property type="match status" value="2"/>
</dbReference>
<dbReference type="PROSITE" id="PS51722">
    <property type="entry name" value="G_TR_2"/>
    <property type="match status" value="1"/>
</dbReference>
<dbReference type="PROSITE" id="PS01176">
    <property type="entry name" value="IF2"/>
    <property type="match status" value="1"/>
</dbReference>
<evidence type="ECO:0000250" key="1"/>
<evidence type="ECO:0000255" key="2">
    <source>
        <dbReference type="HAMAP-Rule" id="MF_00100"/>
    </source>
</evidence>
<evidence type="ECO:0000256" key="3">
    <source>
        <dbReference type="SAM" id="MobiDB-lite"/>
    </source>
</evidence>
<evidence type="ECO:0000305" key="4"/>
<proteinExistence type="inferred from homology"/>
<keyword id="KW-0963">Cytoplasm</keyword>
<keyword id="KW-0342">GTP-binding</keyword>
<keyword id="KW-0396">Initiation factor</keyword>
<keyword id="KW-0547">Nucleotide-binding</keyword>
<keyword id="KW-0648">Protein biosynthesis</keyword>
<accession>Q8YEB3</accession>
<comment type="function">
    <text evidence="2">One of the essential components for the initiation of protein synthesis. Protects formylmethionyl-tRNA from spontaneous hydrolysis and promotes its binding to the 30S ribosomal subunits. Also involved in the hydrolysis of GTP during the formation of the 70S ribosomal complex.</text>
</comment>
<comment type="subcellular location">
    <subcellularLocation>
        <location evidence="2">Cytoplasm</location>
    </subcellularLocation>
</comment>
<comment type="similarity">
    <text evidence="2">Belongs to the TRAFAC class translation factor GTPase superfamily. Classic translation factor GTPase family. IF-2 subfamily.</text>
</comment>
<comment type="sequence caution" evidence="4">
    <conflict type="erroneous initiation">
        <sequence resource="EMBL-CDS" id="AAL53146"/>
    </conflict>
</comment>